<reference key="1">
    <citation type="journal article" date="2007" name="J. Bacteriol.">
        <title>Complete genome sequence of Haemophilus somnus (Histophilus somni) strain 129Pt and comparison to Haemophilus ducreyi 35000HP and Haemophilus influenzae Rd.</title>
        <authorList>
            <person name="Challacombe J.F."/>
            <person name="Duncan A.J."/>
            <person name="Brettin T.S."/>
            <person name="Bruce D."/>
            <person name="Chertkov O."/>
            <person name="Detter J.C."/>
            <person name="Han C.S."/>
            <person name="Misra M."/>
            <person name="Richardson P."/>
            <person name="Tapia R."/>
            <person name="Thayer N."/>
            <person name="Xie G."/>
            <person name="Inzana T.J."/>
        </authorList>
    </citation>
    <scope>NUCLEOTIDE SEQUENCE [LARGE SCALE GENOMIC DNA]</scope>
    <source>
        <strain>129Pt</strain>
    </source>
</reference>
<sequence>MARTTPISLYRNIGISAHIDAGKTTTTERILFYTGVSHKIGEVHDGAATMDWMEQEQERGITITSAATTAFWSGMSQQFPQHRINVIDTPGHVDFTIEVERSMRVLDGAVMVYCAVGGVQPQSETVWRQANKYKVPRIAFVNKMDRTGANFLRVVEQIKTRLGGNAVPLQLPIGAEDNFKGVVDLIKMKAINWNEADQGMTFTYEDIPAEMLAECEKWRANLVEAAAESSDELMDKFFSGDELTEEEIKKGLRLRALKTEIILVTCGSAFKNKGVQAMLDAVIDYLPAPTDIEAIKGINPDETEGERHASDDEPFAALAFKIATDPFVGNLTFFRVYSGVVESGATVLNSVKDKRERFGRIVQMHANKREEIKEVRAGDIAAAIGLKDVGTGDTLCAMDAPIILERMEFPEPVISVAVEPKTKADQEKMGLALGRLAQEDPSFRVHTDEESGETIISGMGELHLDIIVDRMRREFKVEANIGKPQVSYRETIRTRVNDVEGKHAKQSGGRGQYGHVVIDLYPLEPEGPGYEFVNEIKGGVIPGEYIPAVDKGIQEQLKSGPLAGYPVVDLGVRLHFGSYHDVDSSELAFKLAASLAFKAAFNKANPVLLEPIMKVEVETPPDYVGDVIGDLSRRRAMVSGQEANEFVVKINAEVPLAEMFGYATDLRSQTQGRASYSMEPLKYAEAPKNVADAVIEARKK</sequence>
<name>EFG_HISS1</name>
<gene>
    <name evidence="1" type="primary">fusA</name>
    <name type="ordered locus">HS_1645</name>
</gene>
<accession>Q0I537</accession>
<proteinExistence type="inferred from homology"/>
<dbReference type="EMBL" id="CP000436">
    <property type="protein sequence ID" value="ABI25913.1"/>
    <property type="molecule type" value="Genomic_DNA"/>
</dbReference>
<dbReference type="SMR" id="Q0I537"/>
<dbReference type="KEGG" id="hso:HS_1645"/>
<dbReference type="eggNOG" id="COG0480">
    <property type="taxonomic scope" value="Bacteria"/>
</dbReference>
<dbReference type="HOGENOM" id="CLU_002794_4_1_6"/>
<dbReference type="GO" id="GO:0005737">
    <property type="term" value="C:cytoplasm"/>
    <property type="evidence" value="ECO:0007669"/>
    <property type="project" value="UniProtKB-SubCell"/>
</dbReference>
<dbReference type="GO" id="GO:0005525">
    <property type="term" value="F:GTP binding"/>
    <property type="evidence" value="ECO:0007669"/>
    <property type="project" value="UniProtKB-UniRule"/>
</dbReference>
<dbReference type="GO" id="GO:0003924">
    <property type="term" value="F:GTPase activity"/>
    <property type="evidence" value="ECO:0007669"/>
    <property type="project" value="InterPro"/>
</dbReference>
<dbReference type="GO" id="GO:0097216">
    <property type="term" value="F:guanosine tetraphosphate binding"/>
    <property type="evidence" value="ECO:0007669"/>
    <property type="project" value="UniProtKB-ARBA"/>
</dbReference>
<dbReference type="GO" id="GO:0003746">
    <property type="term" value="F:translation elongation factor activity"/>
    <property type="evidence" value="ECO:0007669"/>
    <property type="project" value="UniProtKB-UniRule"/>
</dbReference>
<dbReference type="GO" id="GO:0032790">
    <property type="term" value="P:ribosome disassembly"/>
    <property type="evidence" value="ECO:0007669"/>
    <property type="project" value="TreeGrafter"/>
</dbReference>
<dbReference type="CDD" id="cd01886">
    <property type="entry name" value="EF-G"/>
    <property type="match status" value="1"/>
</dbReference>
<dbReference type="CDD" id="cd16262">
    <property type="entry name" value="EFG_III"/>
    <property type="match status" value="1"/>
</dbReference>
<dbReference type="CDD" id="cd01434">
    <property type="entry name" value="EFG_mtEFG1_IV"/>
    <property type="match status" value="1"/>
</dbReference>
<dbReference type="CDD" id="cd03713">
    <property type="entry name" value="EFG_mtEFG_C"/>
    <property type="match status" value="1"/>
</dbReference>
<dbReference type="CDD" id="cd04088">
    <property type="entry name" value="EFG_mtEFG_II"/>
    <property type="match status" value="1"/>
</dbReference>
<dbReference type="FunFam" id="2.40.30.10:FF:000006">
    <property type="entry name" value="Elongation factor G"/>
    <property type="match status" value="1"/>
</dbReference>
<dbReference type="FunFam" id="3.30.230.10:FF:000003">
    <property type="entry name" value="Elongation factor G"/>
    <property type="match status" value="1"/>
</dbReference>
<dbReference type="FunFam" id="3.30.70.240:FF:000001">
    <property type="entry name" value="Elongation factor G"/>
    <property type="match status" value="1"/>
</dbReference>
<dbReference type="FunFam" id="3.30.70.870:FF:000001">
    <property type="entry name" value="Elongation factor G"/>
    <property type="match status" value="1"/>
</dbReference>
<dbReference type="FunFam" id="3.40.50.300:FF:000029">
    <property type="entry name" value="Elongation factor G"/>
    <property type="match status" value="1"/>
</dbReference>
<dbReference type="Gene3D" id="3.30.230.10">
    <property type="match status" value="1"/>
</dbReference>
<dbReference type="Gene3D" id="3.30.70.240">
    <property type="match status" value="1"/>
</dbReference>
<dbReference type="Gene3D" id="3.30.70.870">
    <property type="entry name" value="Elongation Factor G (Translational Gtpase), domain 3"/>
    <property type="match status" value="1"/>
</dbReference>
<dbReference type="Gene3D" id="3.40.50.300">
    <property type="entry name" value="P-loop containing nucleotide triphosphate hydrolases"/>
    <property type="match status" value="1"/>
</dbReference>
<dbReference type="Gene3D" id="2.40.30.10">
    <property type="entry name" value="Translation factors"/>
    <property type="match status" value="1"/>
</dbReference>
<dbReference type="HAMAP" id="MF_00054_B">
    <property type="entry name" value="EF_G_EF_2_B"/>
    <property type="match status" value="1"/>
</dbReference>
<dbReference type="InterPro" id="IPR041095">
    <property type="entry name" value="EFG_II"/>
</dbReference>
<dbReference type="InterPro" id="IPR009022">
    <property type="entry name" value="EFG_III"/>
</dbReference>
<dbReference type="InterPro" id="IPR035647">
    <property type="entry name" value="EFG_III/V"/>
</dbReference>
<dbReference type="InterPro" id="IPR047872">
    <property type="entry name" value="EFG_IV"/>
</dbReference>
<dbReference type="InterPro" id="IPR035649">
    <property type="entry name" value="EFG_V"/>
</dbReference>
<dbReference type="InterPro" id="IPR000640">
    <property type="entry name" value="EFG_V-like"/>
</dbReference>
<dbReference type="InterPro" id="IPR004161">
    <property type="entry name" value="EFTu-like_2"/>
</dbReference>
<dbReference type="InterPro" id="IPR031157">
    <property type="entry name" value="G_TR_CS"/>
</dbReference>
<dbReference type="InterPro" id="IPR027417">
    <property type="entry name" value="P-loop_NTPase"/>
</dbReference>
<dbReference type="InterPro" id="IPR020568">
    <property type="entry name" value="Ribosomal_Su5_D2-typ_SF"/>
</dbReference>
<dbReference type="InterPro" id="IPR014721">
    <property type="entry name" value="Ribsml_uS5_D2-typ_fold_subgr"/>
</dbReference>
<dbReference type="InterPro" id="IPR005225">
    <property type="entry name" value="Small_GTP-bd"/>
</dbReference>
<dbReference type="InterPro" id="IPR000795">
    <property type="entry name" value="T_Tr_GTP-bd_dom"/>
</dbReference>
<dbReference type="InterPro" id="IPR009000">
    <property type="entry name" value="Transl_B-barrel_sf"/>
</dbReference>
<dbReference type="InterPro" id="IPR004540">
    <property type="entry name" value="Transl_elong_EFG/EF2"/>
</dbReference>
<dbReference type="InterPro" id="IPR005517">
    <property type="entry name" value="Transl_elong_EFG/EF2_IV"/>
</dbReference>
<dbReference type="NCBIfam" id="TIGR00484">
    <property type="entry name" value="EF-G"/>
    <property type="match status" value="1"/>
</dbReference>
<dbReference type="NCBIfam" id="NF009381">
    <property type="entry name" value="PRK12740.1-5"/>
    <property type="match status" value="1"/>
</dbReference>
<dbReference type="NCBIfam" id="TIGR00231">
    <property type="entry name" value="small_GTP"/>
    <property type="match status" value="1"/>
</dbReference>
<dbReference type="PANTHER" id="PTHR43261:SF1">
    <property type="entry name" value="RIBOSOME-RELEASING FACTOR 2, MITOCHONDRIAL"/>
    <property type="match status" value="1"/>
</dbReference>
<dbReference type="PANTHER" id="PTHR43261">
    <property type="entry name" value="TRANSLATION ELONGATION FACTOR G-RELATED"/>
    <property type="match status" value="1"/>
</dbReference>
<dbReference type="Pfam" id="PF00679">
    <property type="entry name" value="EFG_C"/>
    <property type="match status" value="1"/>
</dbReference>
<dbReference type="Pfam" id="PF14492">
    <property type="entry name" value="EFG_III"/>
    <property type="match status" value="1"/>
</dbReference>
<dbReference type="Pfam" id="PF03764">
    <property type="entry name" value="EFG_IV"/>
    <property type="match status" value="1"/>
</dbReference>
<dbReference type="Pfam" id="PF00009">
    <property type="entry name" value="GTP_EFTU"/>
    <property type="match status" value="1"/>
</dbReference>
<dbReference type="Pfam" id="PF03144">
    <property type="entry name" value="GTP_EFTU_D2"/>
    <property type="match status" value="1"/>
</dbReference>
<dbReference type="PRINTS" id="PR00315">
    <property type="entry name" value="ELONGATNFCT"/>
</dbReference>
<dbReference type="SMART" id="SM00838">
    <property type="entry name" value="EFG_C"/>
    <property type="match status" value="1"/>
</dbReference>
<dbReference type="SMART" id="SM00889">
    <property type="entry name" value="EFG_IV"/>
    <property type="match status" value="1"/>
</dbReference>
<dbReference type="SUPFAM" id="SSF54980">
    <property type="entry name" value="EF-G C-terminal domain-like"/>
    <property type="match status" value="2"/>
</dbReference>
<dbReference type="SUPFAM" id="SSF52540">
    <property type="entry name" value="P-loop containing nucleoside triphosphate hydrolases"/>
    <property type="match status" value="1"/>
</dbReference>
<dbReference type="SUPFAM" id="SSF54211">
    <property type="entry name" value="Ribosomal protein S5 domain 2-like"/>
    <property type="match status" value="1"/>
</dbReference>
<dbReference type="SUPFAM" id="SSF50447">
    <property type="entry name" value="Translation proteins"/>
    <property type="match status" value="1"/>
</dbReference>
<dbReference type="PROSITE" id="PS00301">
    <property type="entry name" value="G_TR_1"/>
    <property type="match status" value="1"/>
</dbReference>
<dbReference type="PROSITE" id="PS51722">
    <property type="entry name" value="G_TR_2"/>
    <property type="match status" value="1"/>
</dbReference>
<protein>
    <recommendedName>
        <fullName evidence="1">Elongation factor G</fullName>
        <shortName evidence="1">EF-G</shortName>
    </recommendedName>
</protein>
<comment type="function">
    <text evidence="1">Catalyzes the GTP-dependent ribosomal translocation step during translation elongation. During this step, the ribosome changes from the pre-translocational (PRE) to the post-translocational (POST) state as the newly formed A-site-bound peptidyl-tRNA and P-site-bound deacylated tRNA move to the P and E sites, respectively. Catalyzes the coordinated movement of the two tRNA molecules, the mRNA and conformational changes in the ribosome.</text>
</comment>
<comment type="subcellular location">
    <subcellularLocation>
        <location evidence="1">Cytoplasm</location>
    </subcellularLocation>
</comment>
<comment type="similarity">
    <text evidence="1">Belongs to the TRAFAC class translation factor GTPase superfamily. Classic translation factor GTPase family. EF-G/EF-2 subfamily.</text>
</comment>
<keyword id="KW-0963">Cytoplasm</keyword>
<keyword id="KW-0251">Elongation factor</keyword>
<keyword id="KW-0342">GTP-binding</keyword>
<keyword id="KW-0547">Nucleotide-binding</keyword>
<keyword id="KW-0648">Protein biosynthesis</keyword>
<evidence type="ECO:0000255" key="1">
    <source>
        <dbReference type="HAMAP-Rule" id="MF_00054"/>
    </source>
</evidence>
<feature type="chain" id="PRO_0000263457" description="Elongation factor G">
    <location>
        <begin position="1"/>
        <end position="700"/>
    </location>
</feature>
<feature type="domain" description="tr-type G">
    <location>
        <begin position="8"/>
        <end position="290"/>
    </location>
</feature>
<feature type="binding site" evidence="1">
    <location>
        <begin position="17"/>
        <end position="24"/>
    </location>
    <ligand>
        <name>GTP</name>
        <dbReference type="ChEBI" id="CHEBI:37565"/>
    </ligand>
</feature>
<feature type="binding site" evidence="1">
    <location>
        <begin position="88"/>
        <end position="92"/>
    </location>
    <ligand>
        <name>GTP</name>
        <dbReference type="ChEBI" id="CHEBI:37565"/>
    </ligand>
</feature>
<feature type="binding site" evidence="1">
    <location>
        <begin position="142"/>
        <end position="145"/>
    </location>
    <ligand>
        <name>GTP</name>
        <dbReference type="ChEBI" id="CHEBI:37565"/>
    </ligand>
</feature>
<organism>
    <name type="scientific">Histophilus somni (strain 129Pt)</name>
    <name type="common">Haemophilus somnus</name>
    <dbReference type="NCBI Taxonomy" id="205914"/>
    <lineage>
        <taxon>Bacteria</taxon>
        <taxon>Pseudomonadati</taxon>
        <taxon>Pseudomonadota</taxon>
        <taxon>Gammaproteobacteria</taxon>
        <taxon>Pasteurellales</taxon>
        <taxon>Pasteurellaceae</taxon>
        <taxon>Histophilus</taxon>
    </lineage>
</organism>